<gene>
    <name evidence="1" type="primary">recO</name>
    <name type="ordered locus">spr0036</name>
</gene>
<feature type="chain" id="PRO_0000205010" description="DNA repair protein RecO">
    <location>
        <begin position="1"/>
        <end position="256"/>
    </location>
</feature>
<accession>Q8DRN4</accession>
<reference key="1">
    <citation type="journal article" date="2001" name="J. Bacteriol.">
        <title>Genome of the bacterium Streptococcus pneumoniae strain R6.</title>
        <authorList>
            <person name="Hoskins J."/>
            <person name="Alborn W.E. Jr."/>
            <person name="Arnold J."/>
            <person name="Blaszczak L.C."/>
            <person name="Burgett S."/>
            <person name="DeHoff B.S."/>
            <person name="Estrem S.T."/>
            <person name="Fritz L."/>
            <person name="Fu D.-J."/>
            <person name="Fuller W."/>
            <person name="Geringer C."/>
            <person name="Gilmour R."/>
            <person name="Glass J.S."/>
            <person name="Khoja H."/>
            <person name="Kraft A.R."/>
            <person name="Lagace R.E."/>
            <person name="LeBlanc D.J."/>
            <person name="Lee L.N."/>
            <person name="Lefkowitz E.J."/>
            <person name="Lu J."/>
            <person name="Matsushima P."/>
            <person name="McAhren S.M."/>
            <person name="McHenney M."/>
            <person name="McLeaster K."/>
            <person name="Mundy C.W."/>
            <person name="Nicas T.I."/>
            <person name="Norris F.H."/>
            <person name="O'Gara M."/>
            <person name="Peery R.B."/>
            <person name="Robertson G.T."/>
            <person name="Rockey P."/>
            <person name="Sun P.-M."/>
            <person name="Winkler M.E."/>
            <person name="Yang Y."/>
            <person name="Young-Bellido M."/>
            <person name="Zhao G."/>
            <person name="Zook C.A."/>
            <person name="Baltz R.H."/>
            <person name="Jaskunas S.R."/>
            <person name="Rosteck P.R. Jr."/>
            <person name="Skatrud P.L."/>
            <person name="Glass J.I."/>
        </authorList>
    </citation>
    <scope>NUCLEOTIDE SEQUENCE [LARGE SCALE GENOMIC DNA]</scope>
    <source>
        <strain>ATCC BAA-255 / R6</strain>
    </source>
</reference>
<reference key="2">
    <citation type="journal article" date="2015" name="PLoS Genet.">
        <title>RecFOR is not required for pneumococcal transformation but together with XerS for resolution of chromosome dimers frequently formed in the process.</title>
        <authorList>
            <person name="Johnston C."/>
            <person name="Mortier-Barriere I."/>
            <person name="Granadel C."/>
            <person name="Polard P."/>
            <person name="Martin B."/>
            <person name="Claverys J.P."/>
        </authorList>
    </citation>
    <scope>FUNCTION</scope>
    <scope>DISRUPTION PHENOTYPE</scope>
</reference>
<sequence length="256" mass="29818">MIQSITSQGLVLYNRNFREDDKLVKIFTEQVGKRMFFVKHAGQSKLAPVIQPLVLARFLLRINDDGLSYIEDYHEVMTFPKINSDLFVMAYATYVAALADASLQDNQQDAPLFAFLQKTLELMEAGLDYQVLTNIFEIQILTRFGISLNFNECVFCHRVGQAFDFSFKYGTCLCPEHYHEDERRCHLNPNIPYLLNQFQAIDFETLETISLKPGIKQELRQFMDQLYEEYVGIHLKSKKFIDSLADWGQLLKEEKK</sequence>
<evidence type="ECO:0000255" key="1">
    <source>
        <dbReference type="HAMAP-Rule" id="MF_00201"/>
    </source>
</evidence>
<evidence type="ECO:0000269" key="2">
    <source>
    </source>
</evidence>
<comment type="function">
    <text evidence="1 2">Involved in DNA repair and RecF pathway recombination (By similarity). Plays no role in chromosomal or plasmid transformation but is required for resolution of chromosome dimers occurring as intermediates in the formation of merodiploids by transformation (PubMed:25569614).</text>
</comment>
<comment type="disruption phenotype">
    <text evidence="2">Mutant is sensitive to the alkylating agent methyl methanesulfonate and the DNA cross-linking agent mitomycin C.</text>
</comment>
<comment type="similarity">
    <text evidence="1">Belongs to the RecO family.</text>
</comment>
<protein>
    <recommendedName>
        <fullName evidence="1">DNA repair protein RecO</fullName>
    </recommendedName>
    <alternativeName>
        <fullName evidence="1">Recombination protein O</fullName>
    </alternativeName>
</protein>
<proteinExistence type="inferred from homology"/>
<organism>
    <name type="scientific">Streptococcus pneumoniae (strain ATCC BAA-255 / R6)</name>
    <dbReference type="NCBI Taxonomy" id="171101"/>
    <lineage>
        <taxon>Bacteria</taxon>
        <taxon>Bacillati</taxon>
        <taxon>Bacillota</taxon>
        <taxon>Bacilli</taxon>
        <taxon>Lactobacillales</taxon>
        <taxon>Streptococcaceae</taxon>
        <taxon>Streptococcus</taxon>
    </lineage>
</organism>
<name>RECO_STRR6</name>
<dbReference type="EMBL" id="AE007317">
    <property type="protein sequence ID" value="AAK98840.1"/>
    <property type="molecule type" value="Genomic_DNA"/>
</dbReference>
<dbReference type="PIR" id="D97876">
    <property type="entry name" value="D97876"/>
</dbReference>
<dbReference type="RefSeq" id="NP_357630.1">
    <property type="nucleotide sequence ID" value="NC_003098.1"/>
</dbReference>
<dbReference type="RefSeq" id="WP_000616166.1">
    <property type="nucleotide sequence ID" value="NC_003098.1"/>
</dbReference>
<dbReference type="SMR" id="Q8DRN4"/>
<dbReference type="STRING" id="171101.spr0036"/>
<dbReference type="KEGG" id="spr:spr0036"/>
<dbReference type="PATRIC" id="fig|171101.6.peg.42"/>
<dbReference type="eggNOG" id="COG1381">
    <property type="taxonomic scope" value="Bacteria"/>
</dbReference>
<dbReference type="HOGENOM" id="CLU_066632_4_0_9"/>
<dbReference type="Proteomes" id="UP000000586">
    <property type="component" value="Chromosome"/>
</dbReference>
<dbReference type="GO" id="GO:0043590">
    <property type="term" value="C:bacterial nucleoid"/>
    <property type="evidence" value="ECO:0000318"/>
    <property type="project" value="GO_Central"/>
</dbReference>
<dbReference type="GO" id="GO:0006310">
    <property type="term" value="P:DNA recombination"/>
    <property type="evidence" value="ECO:0007669"/>
    <property type="project" value="UniProtKB-UniRule"/>
</dbReference>
<dbReference type="GO" id="GO:0006302">
    <property type="term" value="P:double-strand break repair"/>
    <property type="evidence" value="ECO:0000318"/>
    <property type="project" value="GO_Central"/>
</dbReference>
<dbReference type="Gene3D" id="2.40.50.140">
    <property type="entry name" value="Nucleic acid-binding proteins"/>
    <property type="match status" value="1"/>
</dbReference>
<dbReference type="Gene3D" id="1.20.1440.120">
    <property type="entry name" value="Recombination protein O, C-terminal domain"/>
    <property type="match status" value="1"/>
</dbReference>
<dbReference type="HAMAP" id="MF_00201">
    <property type="entry name" value="RecO"/>
    <property type="match status" value="1"/>
</dbReference>
<dbReference type="InterPro" id="IPR037278">
    <property type="entry name" value="ARFGAP/RecO"/>
</dbReference>
<dbReference type="InterPro" id="IPR022572">
    <property type="entry name" value="DNA_rep/recomb_RecO_N"/>
</dbReference>
<dbReference type="InterPro" id="IPR012340">
    <property type="entry name" value="NA-bd_OB-fold"/>
</dbReference>
<dbReference type="InterPro" id="IPR003717">
    <property type="entry name" value="RecO"/>
</dbReference>
<dbReference type="InterPro" id="IPR042242">
    <property type="entry name" value="RecO_C"/>
</dbReference>
<dbReference type="NCBIfam" id="TIGR00613">
    <property type="entry name" value="reco"/>
    <property type="match status" value="1"/>
</dbReference>
<dbReference type="PANTHER" id="PTHR33991">
    <property type="entry name" value="DNA REPAIR PROTEIN RECO"/>
    <property type="match status" value="1"/>
</dbReference>
<dbReference type="PANTHER" id="PTHR33991:SF1">
    <property type="entry name" value="DNA REPAIR PROTEIN RECO"/>
    <property type="match status" value="1"/>
</dbReference>
<dbReference type="Pfam" id="PF02565">
    <property type="entry name" value="RecO_C"/>
    <property type="match status" value="1"/>
</dbReference>
<dbReference type="Pfam" id="PF11967">
    <property type="entry name" value="RecO_N"/>
    <property type="match status" value="1"/>
</dbReference>
<dbReference type="SUPFAM" id="SSF57863">
    <property type="entry name" value="ArfGap/RecO-like zinc finger"/>
    <property type="match status" value="1"/>
</dbReference>
<dbReference type="SUPFAM" id="SSF50249">
    <property type="entry name" value="Nucleic acid-binding proteins"/>
    <property type="match status" value="1"/>
</dbReference>
<keyword id="KW-0227">DNA damage</keyword>
<keyword id="KW-0233">DNA recombination</keyword>
<keyword id="KW-0234">DNA repair</keyword>
<keyword id="KW-1185">Reference proteome</keyword>